<organism>
    <name type="scientific">Amia calva</name>
    <name type="common">Bowfin</name>
    <dbReference type="NCBI Taxonomy" id="7924"/>
    <lineage>
        <taxon>Eukaryota</taxon>
        <taxon>Metazoa</taxon>
        <taxon>Chordata</taxon>
        <taxon>Craniata</taxon>
        <taxon>Vertebrata</taxon>
        <taxon>Euteleostomi</taxon>
        <taxon>Actinopterygii</taxon>
        <taxon>Neopterygii</taxon>
        <taxon>Holostei</taxon>
        <taxon>Amiiformes</taxon>
        <taxon>Amiidae</taxon>
        <taxon>Amia</taxon>
    </lineage>
</organism>
<name>SMS1_AMICA</name>
<proteinExistence type="evidence at protein level"/>
<protein>
    <recommendedName>
        <fullName>Somatostatin-1</fullName>
    </recommendedName>
    <alternativeName>
        <fullName>Somatostatin I</fullName>
    </alternativeName>
    <component>
        <recommendedName>
            <fullName>Somatostatin-26</fullName>
        </recommendedName>
    </component>
    <component>
        <recommendedName>
            <fullName>Somatostatin-14</fullName>
        </recommendedName>
    </component>
</protein>
<comment type="function">
    <text>Somatostatin inhibits the release of somatotropin.</text>
</comment>
<comment type="subcellular location">
    <subcellularLocation>
        <location>Secreted</location>
    </subcellularLocation>
</comment>
<comment type="similarity">
    <text evidence="1">Belongs to the somatostatin family.</text>
</comment>
<feature type="peptide" id="PRO_0000033113" description="Somatostatin-26">
    <location>
        <begin position="1"/>
        <end position="26"/>
    </location>
</feature>
<feature type="peptide" id="PRO_0000033114" description="Somatostatin-14">
    <location>
        <begin position="13"/>
        <end position="26"/>
    </location>
</feature>
<feature type="disulfide bond">
    <location>
        <begin position="15"/>
        <end position="26"/>
    </location>
</feature>
<feature type="non-terminal residue">
    <location>
        <position position="1"/>
    </location>
</feature>
<accession>Q9PRZ6</accession>
<gene>
    <name type="primary">sst1</name>
</gene>
<evidence type="ECO:0000305" key="1"/>
<keyword id="KW-0165">Cleavage on pair of basic residues</keyword>
<keyword id="KW-0903">Direct protein sequencing</keyword>
<keyword id="KW-1015">Disulfide bond</keyword>
<keyword id="KW-0372">Hormone</keyword>
<keyword id="KW-0964">Secreted</keyword>
<sequence>SANPALAPRERKAGCKNFFWKTFTSC</sequence>
<dbReference type="GO" id="GO:0005615">
    <property type="term" value="C:extracellular space"/>
    <property type="evidence" value="ECO:0007669"/>
    <property type="project" value="TreeGrafter"/>
</dbReference>
<dbReference type="GO" id="GO:0005179">
    <property type="term" value="F:hormone activity"/>
    <property type="evidence" value="ECO:0007669"/>
    <property type="project" value="UniProtKB-KW"/>
</dbReference>
<dbReference type="GO" id="GO:0030334">
    <property type="term" value="P:regulation of cell migration"/>
    <property type="evidence" value="ECO:0007669"/>
    <property type="project" value="TreeGrafter"/>
</dbReference>
<dbReference type="InterPro" id="IPR004250">
    <property type="entry name" value="Somatostatin"/>
</dbReference>
<dbReference type="InterPro" id="IPR018142">
    <property type="entry name" value="Somatostatin/Cortistatin_C"/>
</dbReference>
<dbReference type="PANTHER" id="PTHR10558">
    <property type="entry name" value="SOMATOSTATIN"/>
    <property type="match status" value="1"/>
</dbReference>
<dbReference type="PANTHER" id="PTHR10558:SF2">
    <property type="entry name" value="SOMATOSTATIN"/>
    <property type="match status" value="1"/>
</dbReference>
<dbReference type="Pfam" id="PF03002">
    <property type="entry name" value="Somatostatin"/>
    <property type="match status" value="1"/>
</dbReference>
<reference key="1">
    <citation type="journal article" date="1993" name="Regul. Pept.">
        <title>Prosomatostatin-I is processed to somatostatin-26 and somatostatin-14 in the pancreas of the bowfin, Amia calva.</title>
        <authorList>
            <person name="Wang Y."/>
            <person name="Youson J.H."/>
            <person name="Conlon J.M."/>
        </authorList>
    </citation>
    <scope>PROTEIN SEQUENCE</scope>
    <source>
        <tissue>Pancreas</tissue>
    </source>
</reference>